<keyword id="KW-0143">Chaperone</keyword>
<keyword id="KW-0963">Cytoplasm</keyword>
<keyword id="KW-0996">Nickel insertion</keyword>
<accession>Q210G1</accession>
<evidence type="ECO:0000255" key="1">
    <source>
        <dbReference type="HAMAP-Rule" id="MF_01385"/>
    </source>
</evidence>
<sequence length="241" mass="25179">MATSTNSQDDAALSAAQAAALYRLMTWLSPAFPVGAFSYSSGIEWAVEAGDVVDAPTLQAWLAAMLSHGTGFCDAVLLAHAHRAVISNDDDALRSLAELACAYVSSRERHLETTAQGRAFVEIARAAWANGRLERAVADCAGLTAYPVAVGIVSAAHGVPLAATLHGFLHAVVSNWISAGARLIPLGQTDSQRLIAALEPAVIATGARALIASLDDLGGATFRADLASLQHEAQYTRLFRS</sequence>
<name>UREF_RHOPB</name>
<protein>
    <recommendedName>
        <fullName evidence="1">Urease accessory protein UreF</fullName>
    </recommendedName>
</protein>
<gene>
    <name evidence="1" type="primary">ureF</name>
    <name type="ordered locus">RPC_3690</name>
</gene>
<comment type="function">
    <text evidence="1">Required for maturation of urease via the functional incorporation of the urease nickel metallocenter.</text>
</comment>
<comment type="subunit">
    <text evidence="1">UreD, UreF and UreG form a complex that acts as a GTP-hydrolysis-dependent molecular chaperone, activating the urease apoprotein by helping to assemble the nickel containing metallocenter of UreC. The UreE protein probably delivers the nickel.</text>
</comment>
<comment type="subcellular location">
    <subcellularLocation>
        <location evidence="1">Cytoplasm</location>
    </subcellularLocation>
</comment>
<comment type="similarity">
    <text evidence="1">Belongs to the UreF family.</text>
</comment>
<feature type="chain" id="PRO_0000344171" description="Urease accessory protein UreF">
    <location>
        <begin position="1"/>
        <end position="241"/>
    </location>
</feature>
<organism>
    <name type="scientific">Rhodopseudomonas palustris (strain BisB18)</name>
    <dbReference type="NCBI Taxonomy" id="316056"/>
    <lineage>
        <taxon>Bacteria</taxon>
        <taxon>Pseudomonadati</taxon>
        <taxon>Pseudomonadota</taxon>
        <taxon>Alphaproteobacteria</taxon>
        <taxon>Hyphomicrobiales</taxon>
        <taxon>Nitrobacteraceae</taxon>
        <taxon>Rhodopseudomonas</taxon>
    </lineage>
</organism>
<proteinExistence type="inferred from homology"/>
<dbReference type="EMBL" id="CP000301">
    <property type="protein sequence ID" value="ABD89225.1"/>
    <property type="molecule type" value="Genomic_DNA"/>
</dbReference>
<dbReference type="SMR" id="Q210G1"/>
<dbReference type="STRING" id="316056.RPC_3690"/>
<dbReference type="KEGG" id="rpc:RPC_3690"/>
<dbReference type="eggNOG" id="COG0830">
    <property type="taxonomic scope" value="Bacteria"/>
</dbReference>
<dbReference type="HOGENOM" id="CLU_049215_2_0_5"/>
<dbReference type="OrthoDB" id="9798772at2"/>
<dbReference type="GO" id="GO:0005737">
    <property type="term" value="C:cytoplasm"/>
    <property type="evidence" value="ECO:0007669"/>
    <property type="project" value="UniProtKB-SubCell"/>
</dbReference>
<dbReference type="GO" id="GO:0016151">
    <property type="term" value="F:nickel cation binding"/>
    <property type="evidence" value="ECO:0007669"/>
    <property type="project" value="UniProtKB-UniRule"/>
</dbReference>
<dbReference type="Gene3D" id="1.10.4190.10">
    <property type="entry name" value="Urease accessory protein UreF"/>
    <property type="match status" value="1"/>
</dbReference>
<dbReference type="HAMAP" id="MF_01385">
    <property type="entry name" value="UreF"/>
    <property type="match status" value="1"/>
</dbReference>
<dbReference type="InterPro" id="IPR002639">
    <property type="entry name" value="UreF"/>
</dbReference>
<dbReference type="InterPro" id="IPR038277">
    <property type="entry name" value="UreF_sf"/>
</dbReference>
<dbReference type="PANTHER" id="PTHR33620">
    <property type="entry name" value="UREASE ACCESSORY PROTEIN F"/>
    <property type="match status" value="1"/>
</dbReference>
<dbReference type="PANTHER" id="PTHR33620:SF1">
    <property type="entry name" value="UREASE ACCESSORY PROTEIN F"/>
    <property type="match status" value="1"/>
</dbReference>
<dbReference type="Pfam" id="PF01730">
    <property type="entry name" value="UreF"/>
    <property type="match status" value="1"/>
</dbReference>
<dbReference type="PIRSF" id="PIRSF009467">
    <property type="entry name" value="Ureas_acces_UreF"/>
    <property type="match status" value="1"/>
</dbReference>
<reference key="1">
    <citation type="submission" date="2006-03" db="EMBL/GenBank/DDBJ databases">
        <title>Complete sequence of Rhodopseudomonas palustris BisB18.</title>
        <authorList>
            <consortium name="US DOE Joint Genome Institute"/>
            <person name="Copeland A."/>
            <person name="Lucas S."/>
            <person name="Lapidus A."/>
            <person name="Barry K."/>
            <person name="Detter J.C."/>
            <person name="Glavina del Rio T."/>
            <person name="Hammon N."/>
            <person name="Israni S."/>
            <person name="Dalin E."/>
            <person name="Tice H."/>
            <person name="Pitluck S."/>
            <person name="Chain P."/>
            <person name="Malfatti S."/>
            <person name="Shin M."/>
            <person name="Vergez L."/>
            <person name="Schmutz J."/>
            <person name="Larimer F."/>
            <person name="Land M."/>
            <person name="Hauser L."/>
            <person name="Pelletier D.A."/>
            <person name="Kyrpides N."/>
            <person name="Anderson I."/>
            <person name="Oda Y."/>
            <person name="Harwood C.S."/>
            <person name="Richardson P."/>
        </authorList>
    </citation>
    <scope>NUCLEOTIDE SEQUENCE [LARGE SCALE GENOMIC DNA]</scope>
    <source>
        <strain>BisB18</strain>
    </source>
</reference>